<sequence length="280" mass="32085">MVFSVATSSVTNPKLHHHHHLSDFNRNRVSTSLKIMNSKNHTNPRKCECFDLYDQLIPYKKAWSWQKSILNEKKALIDKNQECSDSLIILQHPSVYTMGTGSSENYLNFDIKNAPFDVYRTERGGEVTYHGPGQLVMYPIINLRNHKMDLHWYLRKLEEVVIRVLSSAFAINASRLDGFTGVWVGNKKMAAIGIRVSKWMTYHGLALNVTTDLTPFNSIVPCGIRNRGVGSVKGLIEDGEHYNKLEDLQLLDIAHESLLKEFSEVFQLQMEKQTVFKLEC</sequence>
<gene>
    <name evidence="5" type="primary">LIP2P2</name>
    <name evidence="7" type="ordered locus">At1g47578</name>
    <name evidence="8" type="ORF">F16N3.14</name>
</gene>
<accession>P0C7R2</accession>
<accession>Q9SX89</accession>
<proteinExistence type="evidence at protein level"/>
<dbReference type="EC" id="2.3.1.181" evidence="3 4"/>
<dbReference type="EMBL" id="AC007519">
    <property type="protein sequence ID" value="AAD46029.1"/>
    <property type="status" value="ALT_SEQ"/>
    <property type="molecule type" value="Genomic_DNA"/>
</dbReference>
<dbReference type="EMBL" id="CP002684">
    <property type="protein sequence ID" value="AEE32189.1"/>
    <property type="molecule type" value="Genomic_DNA"/>
</dbReference>
<dbReference type="PIR" id="D96516">
    <property type="entry name" value="D96516"/>
</dbReference>
<dbReference type="RefSeq" id="NP_001185164.1">
    <property type="nucleotide sequence ID" value="NM_001198235.2"/>
</dbReference>
<dbReference type="SMR" id="P0C7R2"/>
<dbReference type="FunCoup" id="P0C7R2">
    <property type="interactions" value="337"/>
</dbReference>
<dbReference type="STRING" id="3702.P0C7R2"/>
<dbReference type="PaxDb" id="3702-AT1G47578.1"/>
<dbReference type="ProteomicsDB" id="238660"/>
<dbReference type="EnsemblPlants" id="AT1G47578.1">
    <property type="protein sequence ID" value="AT1G47578.1"/>
    <property type="gene ID" value="AT1G47578"/>
</dbReference>
<dbReference type="GeneID" id="10723096"/>
<dbReference type="Gramene" id="AT1G47578.1">
    <property type="protein sequence ID" value="AT1G47578.1"/>
    <property type="gene ID" value="AT1G47578"/>
</dbReference>
<dbReference type="KEGG" id="ath:AT1G47578"/>
<dbReference type="Araport" id="AT1G47578"/>
<dbReference type="TAIR" id="AT1G47578">
    <property type="gene designation" value="LIP2P2"/>
</dbReference>
<dbReference type="eggNOG" id="KOG0325">
    <property type="taxonomic scope" value="Eukaryota"/>
</dbReference>
<dbReference type="HOGENOM" id="CLU_035168_1_0_1"/>
<dbReference type="InParanoid" id="P0C7R2"/>
<dbReference type="OMA" id="VGTRRCE"/>
<dbReference type="BioCyc" id="ARA:AT1G47578-MONOMER"/>
<dbReference type="BRENDA" id="2.3.1.181">
    <property type="organism ID" value="399"/>
</dbReference>
<dbReference type="UniPathway" id="UPA00538">
    <property type="reaction ID" value="UER00592"/>
</dbReference>
<dbReference type="PRO" id="PR:P0C7R2"/>
<dbReference type="Proteomes" id="UP000006548">
    <property type="component" value="Chromosome 1"/>
</dbReference>
<dbReference type="ExpressionAtlas" id="P0C7R2">
    <property type="expression patterns" value="baseline and differential"/>
</dbReference>
<dbReference type="GO" id="GO:0009507">
    <property type="term" value="C:chloroplast"/>
    <property type="evidence" value="ECO:0007669"/>
    <property type="project" value="UniProtKB-SubCell"/>
</dbReference>
<dbReference type="GO" id="GO:0033819">
    <property type="term" value="F:lipoyl(octanoyl) transferase activity"/>
    <property type="evidence" value="ECO:0007669"/>
    <property type="project" value="UniProtKB-EC"/>
</dbReference>
<dbReference type="GO" id="GO:0036211">
    <property type="term" value="P:protein modification process"/>
    <property type="evidence" value="ECO:0007669"/>
    <property type="project" value="InterPro"/>
</dbReference>
<dbReference type="CDD" id="cd16444">
    <property type="entry name" value="LipB"/>
    <property type="match status" value="1"/>
</dbReference>
<dbReference type="FunFam" id="3.30.930.10:FF:000086">
    <property type="entry name" value="Octanoyltransferase LIP2p, chloroplastic isoform A"/>
    <property type="match status" value="1"/>
</dbReference>
<dbReference type="Gene3D" id="3.30.930.10">
    <property type="entry name" value="Bira Bifunctional Protein, Domain 2"/>
    <property type="match status" value="1"/>
</dbReference>
<dbReference type="HAMAP" id="MF_00013">
    <property type="entry name" value="LipB"/>
    <property type="match status" value="1"/>
</dbReference>
<dbReference type="InterPro" id="IPR045864">
    <property type="entry name" value="aa-tRNA-synth_II/BPL/LPL"/>
</dbReference>
<dbReference type="InterPro" id="IPR004143">
    <property type="entry name" value="BPL_LPL_catalytic"/>
</dbReference>
<dbReference type="InterPro" id="IPR000544">
    <property type="entry name" value="Octanoyltransferase"/>
</dbReference>
<dbReference type="InterPro" id="IPR020605">
    <property type="entry name" value="Octanoyltransferase_CS"/>
</dbReference>
<dbReference type="NCBIfam" id="TIGR00214">
    <property type="entry name" value="lipB"/>
    <property type="match status" value="1"/>
</dbReference>
<dbReference type="NCBIfam" id="NF010925">
    <property type="entry name" value="PRK14345.1"/>
    <property type="match status" value="1"/>
</dbReference>
<dbReference type="PANTHER" id="PTHR10993:SF7">
    <property type="entry name" value="LIPOYLTRANSFERASE 2, MITOCHONDRIAL-RELATED"/>
    <property type="match status" value="1"/>
</dbReference>
<dbReference type="PANTHER" id="PTHR10993">
    <property type="entry name" value="OCTANOYLTRANSFERASE"/>
    <property type="match status" value="1"/>
</dbReference>
<dbReference type="Pfam" id="PF21948">
    <property type="entry name" value="LplA-B_cat"/>
    <property type="match status" value="1"/>
</dbReference>
<dbReference type="SUPFAM" id="SSF55681">
    <property type="entry name" value="Class II aaRS and biotin synthetases"/>
    <property type="match status" value="1"/>
</dbReference>
<dbReference type="PROSITE" id="PS51733">
    <property type="entry name" value="BPL_LPL_CATALYTIC"/>
    <property type="match status" value="1"/>
</dbReference>
<dbReference type="PROSITE" id="PS01313">
    <property type="entry name" value="LIPB"/>
    <property type="match status" value="1"/>
</dbReference>
<evidence type="ECO:0000250" key="1">
    <source>
        <dbReference type="UniProtKB" id="P60720"/>
    </source>
</evidence>
<evidence type="ECO:0000255" key="2"/>
<evidence type="ECO:0000255" key="3">
    <source>
        <dbReference type="HAMAP-Rule" id="MF_00013"/>
    </source>
</evidence>
<evidence type="ECO:0000269" key="4">
    <source>
    </source>
</evidence>
<evidence type="ECO:0000303" key="5">
    <source>
    </source>
</evidence>
<evidence type="ECO:0000305" key="6"/>
<evidence type="ECO:0000312" key="7">
    <source>
        <dbReference type="Araport" id="AT1G47578"/>
    </source>
</evidence>
<evidence type="ECO:0000312" key="8">
    <source>
        <dbReference type="EMBL" id="AAD46029.1"/>
    </source>
</evidence>
<name>LI2P2_ARATH</name>
<organism>
    <name type="scientific">Arabidopsis thaliana</name>
    <name type="common">Mouse-ear cress</name>
    <dbReference type="NCBI Taxonomy" id="3702"/>
    <lineage>
        <taxon>Eukaryota</taxon>
        <taxon>Viridiplantae</taxon>
        <taxon>Streptophyta</taxon>
        <taxon>Embryophyta</taxon>
        <taxon>Tracheophyta</taxon>
        <taxon>Spermatophyta</taxon>
        <taxon>Magnoliopsida</taxon>
        <taxon>eudicotyledons</taxon>
        <taxon>Gunneridae</taxon>
        <taxon>Pentapetalae</taxon>
        <taxon>rosids</taxon>
        <taxon>malvids</taxon>
        <taxon>Brassicales</taxon>
        <taxon>Brassicaceae</taxon>
        <taxon>Camelineae</taxon>
        <taxon>Arabidopsis</taxon>
    </lineage>
</organism>
<feature type="transit peptide" description="Chloroplast" evidence="2">
    <location>
        <begin position="1"/>
        <end position="34"/>
    </location>
</feature>
<feature type="chain" id="PRO_0000342740" description="Octanoyltransferase LIP2p2, chloroplastic">
    <location>
        <begin position="35"/>
        <end position="280"/>
    </location>
</feature>
<feature type="domain" description="BPL/LPL catalytic" evidence="3">
    <location>
        <begin position="81"/>
        <end position="270"/>
    </location>
</feature>
<feature type="active site" description="Acyl-thioester intermediate" evidence="1">
    <location>
        <position position="222"/>
    </location>
</feature>
<feature type="binding site" evidence="3">
    <location>
        <begin position="123"/>
        <end position="130"/>
    </location>
    <ligand>
        <name>substrate</name>
    </ligand>
</feature>
<feature type="binding site" evidence="3">
    <location>
        <begin position="191"/>
        <end position="193"/>
    </location>
    <ligand>
        <name>substrate</name>
    </ligand>
</feature>
<feature type="binding site" evidence="3">
    <location>
        <begin position="204"/>
        <end position="206"/>
    </location>
    <ligand>
        <name>substrate</name>
    </ligand>
</feature>
<feature type="site" description="Lowers pKa of active site Cys" evidence="3">
    <location>
        <position position="188"/>
    </location>
</feature>
<protein>
    <recommendedName>
        <fullName evidence="6">Octanoyltransferase LIP2p2, chloroplastic</fullName>
        <ecNumber evidence="3 4">2.3.1.181</ecNumber>
    </recommendedName>
    <alternativeName>
        <fullName evidence="6">Lipoate-protein ligase 2p2</fullName>
    </alternativeName>
    <alternativeName>
        <fullName evidence="6">Lipoate-protein ligase-like protein</fullName>
    </alternativeName>
    <alternativeName>
        <fullName evidence="6">Lipoyl-[acyl-carrier-protein]-protein-N-lipoyltransferase-like protein 2p2</fullName>
    </alternativeName>
</protein>
<reference key="1">
    <citation type="journal article" date="2000" name="Nature">
        <title>Sequence and analysis of chromosome 1 of the plant Arabidopsis thaliana.</title>
        <authorList>
            <person name="Theologis A."/>
            <person name="Ecker J.R."/>
            <person name="Palm C.J."/>
            <person name="Federspiel N.A."/>
            <person name="Kaul S."/>
            <person name="White O."/>
            <person name="Alonso J."/>
            <person name="Altafi H."/>
            <person name="Araujo R."/>
            <person name="Bowman C.L."/>
            <person name="Brooks S.Y."/>
            <person name="Buehler E."/>
            <person name="Chan A."/>
            <person name="Chao Q."/>
            <person name="Chen H."/>
            <person name="Cheuk R.F."/>
            <person name="Chin C.W."/>
            <person name="Chung M.K."/>
            <person name="Conn L."/>
            <person name="Conway A.B."/>
            <person name="Conway A.R."/>
            <person name="Creasy T.H."/>
            <person name="Dewar K."/>
            <person name="Dunn P."/>
            <person name="Etgu P."/>
            <person name="Feldblyum T.V."/>
            <person name="Feng J.-D."/>
            <person name="Fong B."/>
            <person name="Fujii C.Y."/>
            <person name="Gill J.E."/>
            <person name="Goldsmith A.D."/>
            <person name="Haas B."/>
            <person name="Hansen N.F."/>
            <person name="Hughes B."/>
            <person name="Huizar L."/>
            <person name="Hunter J.L."/>
            <person name="Jenkins J."/>
            <person name="Johnson-Hopson C."/>
            <person name="Khan S."/>
            <person name="Khaykin E."/>
            <person name="Kim C.J."/>
            <person name="Koo H.L."/>
            <person name="Kremenetskaia I."/>
            <person name="Kurtz D.B."/>
            <person name="Kwan A."/>
            <person name="Lam B."/>
            <person name="Langin-Hooper S."/>
            <person name="Lee A."/>
            <person name="Lee J.M."/>
            <person name="Lenz C.A."/>
            <person name="Li J.H."/>
            <person name="Li Y.-P."/>
            <person name="Lin X."/>
            <person name="Liu S.X."/>
            <person name="Liu Z.A."/>
            <person name="Luros J.S."/>
            <person name="Maiti R."/>
            <person name="Marziali A."/>
            <person name="Militscher J."/>
            <person name="Miranda M."/>
            <person name="Nguyen M."/>
            <person name="Nierman W.C."/>
            <person name="Osborne B.I."/>
            <person name="Pai G."/>
            <person name="Peterson J."/>
            <person name="Pham P.K."/>
            <person name="Rizzo M."/>
            <person name="Rooney T."/>
            <person name="Rowley D."/>
            <person name="Sakano H."/>
            <person name="Salzberg S.L."/>
            <person name="Schwartz J.R."/>
            <person name="Shinn P."/>
            <person name="Southwick A.M."/>
            <person name="Sun H."/>
            <person name="Tallon L.J."/>
            <person name="Tambunga G."/>
            <person name="Toriumi M.J."/>
            <person name="Town C.D."/>
            <person name="Utterback T."/>
            <person name="Van Aken S."/>
            <person name="Vaysberg M."/>
            <person name="Vysotskaia V.S."/>
            <person name="Walker M."/>
            <person name="Wu D."/>
            <person name="Yu G."/>
            <person name="Fraser C.M."/>
            <person name="Venter J.C."/>
            <person name="Davis R.W."/>
        </authorList>
    </citation>
    <scope>NUCLEOTIDE SEQUENCE [LARGE SCALE GENOMIC DNA]</scope>
    <source>
        <strain>cv. Columbia</strain>
    </source>
</reference>
<reference key="2">
    <citation type="journal article" date="2017" name="Plant J.">
        <title>Araport11: a complete reannotation of the Arabidopsis thaliana reference genome.</title>
        <authorList>
            <person name="Cheng C.Y."/>
            <person name="Krishnakumar V."/>
            <person name="Chan A.P."/>
            <person name="Thibaud-Nissen F."/>
            <person name="Schobel S."/>
            <person name="Town C.D."/>
        </authorList>
    </citation>
    <scope>GENOME REANNOTATION</scope>
    <source>
        <strain>cv. Columbia</strain>
    </source>
</reference>
<reference key="3">
    <citation type="journal article" date="2014" name="Plant Biol.">
        <title>Two redundant octanoyltransferases and one obligatory lipoyl synthase provide protein-lipoylation autonomy to plastids of Arabidopsis.</title>
        <authorList>
            <person name="Ewald R."/>
            <person name="Hoffmann C."/>
            <person name="Neuhaus E."/>
            <person name="Bauwe H."/>
        </authorList>
    </citation>
    <scope>FUNCTION</scope>
    <scope>CATALYTIC ACTIVITY</scope>
    <scope>SUBCELLULAR LOCATION</scope>
    <scope>TISSUE SPECIFICITY</scope>
    <scope>DISRUPTION PHENOTYPE</scope>
</reference>
<comment type="function">
    <text evidence="3 4">Catalyzes the transfer of endogenously produced octanoic acid from octanoyl-acyl-carrier-protein onto the lipoyl domains of lipoate-dependent enzymes. Lipoyl-ACP can also act as a substrate although octanoyl-ACP is likely to be the physiological substrate (By similarity) (PubMed:23581459). Together with LIP1P is essential for de novo plastidial protein lipoylation during seed development. Acts redundantly with LIP2P (PubMed:23581459).</text>
</comment>
<comment type="catalytic activity">
    <reaction evidence="3 4">
        <text>octanoyl-[ACP] + L-lysyl-[protein] = N(6)-octanoyl-L-lysyl-[protein] + holo-[ACP] + H(+)</text>
        <dbReference type="Rhea" id="RHEA:17665"/>
        <dbReference type="Rhea" id="RHEA-COMP:9636"/>
        <dbReference type="Rhea" id="RHEA-COMP:9685"/>
        <dbReference type="Rhea" id="RHEA-COMP:9752"/>
        <dbReference type="Rhea" id="RHEA-COMP:9928"/>
        <dbReference type="ChEBI" id="CHEBI:15378"/>
        <dbReference type="ChEBI" id="CHEBI:29969"/>
        <dbReference type="ChEBI" id="CHEBI:64479"/>
        <dbReference type="ChEBI" id="CHEBI:78463"/>
        <dbReference type="ChEBI" id="CHEBI:78809"/>
        <dbReference type="EC" id="2.3.1.181"/>
    </reaction>
</comment>
<comment type="pathway">
    <text evidence="3">Protein modification; protein lipoylation via endogenous pathway; protein N(6)-(lipoyl)lysine from octanoyl-[acyl-carrier-protein]: step 1/2.</text>
</comment>
<comment type="subcellular location">
    <subcellularLocation>
        <location evidence="4">Plastid</location>
        <location evidence="4">Chloroplast</location>
    </subcellularLocation>
</comment>
<comment type="tissue specificity">
    <text evidence="4">Expressed in roots, leaves, cauline leaves, stems, siliques and flowers.</text>
</comment>
<comment type="disruption phenotype">
    <text evidence="4">No visible phenotype under normal growth conditions, but the double mutants lip2p and lip2p2 are embryonic lethal.</text>
</comment>
<comment type="miscellaneous">
    <text evidence="3">In the reaction, the free carboxyl group of octanoic acid is attached via an amide linkage to the epsilon-amino group of a specific lysine residue of lipoyl domains of lipoate-dependent enzymes.</text>
</comment>
<comment type="similarity">
    <text evidence="3">Belongs to the LipB family.</text>
</comment>
<comment type="sequence caution" evidence="6">
    <conflict type="erroneous gene model prediction">
        <sequence resource="EMBL-CDS" id="AAD46029"/>
    </conflict>
    <text>The predicted gene has been split into 2 genes: At1g47578 and At1g47580.</text>
</comment>
<keyword id="KW-0012">Acyltransferase</keyword>
<keyword id="KW-0150">Chloroplast</keyword>
<keyword id="KW-0934">Plastid</keyword>
<keyword id="KW-1185">Reference proteome</keyword>
<keyword id="KW-0808">Transferase</keyword>
<keyword id="KW-0809">Transit peptide</keyword>